<comment type="function">
    <text evidence="1">Atypical tyrosine-protein kinase that plays a central role in chromatin remodeling and acts as a transcription regulator. Involved in DNA damage response by phosphorylating 'Tyr-142' of histone H2AX (H2AXY142ph). H2AXY142ph plays a central role in DNA repair and acts as a mark that distinguishes between apoptotic and repair responses to genotoxic stress. Essential component of the WICH complex, a chromatin remodeling complex that mobilizes nucleosomes and reconfigures irregular chromatin to a regular nucleosomal array structure. The WICH complex regulates the transcription of various genes, has a role in RNA polymerase I and RNA polymerase III transcription, mediates the histone H2AX phosphorylation at 'Tyr-142', and is involved in the maintenance of chromatin structures during DNA replication processes.</text>
</comment>
<comment type="catalytic activity">
    <reaction>
        <text>L-tyrosyl-[protein] + ATP = O-phospho-L-tyrosyl-[protein] + ADP + H(+)</text>
        <dbReference type="Rhea" id="RHEA:10596"/>
        <dbReference type="Rhea" id="RHEA-COMP:10136"/>
        <dbReference type="Rhea" id="RHEA-COMP:20101"/>
        <dbReference type="ChEBI" id="CHEBI:15378"/>
        <dbReference type="ChEBI" id="CHEBI:30616"/>
        <dbReference type="ChEBI" id="CHEBI:46858"/>
        <dbReference type="ChEBI" id="CHEBI:61978"/>
        <dbReference type="ChEBI" id="CHEBI:456216"/>
        <dbReference type="EC" id="2.7.10.2"/>
    </reaction>
</comment>
<comment type="cofactor">
    <cofactor evidence="1">
        <name>Mn(2+)</name>
        <dbReference type="ChEBI" id="CHEBI:29035"/>
    </cofactor>
</comment>
<comment type="subunit">
    <text evidence="1">Interacts with smarca5/snf2h; the interaction is direct and forms the WICH complex. Component of the B-WICH complex.</text>
</comment>
<comment type="subcellular location">
    <subcellularLocation>
        <location evidence="5 7">Nucleus</location>
    </subcellularLocation>
    <text evidence="2">Accumulates in pericentromeric heterochromatin during replication. Targeted to replication foci throughout S phase (By similarity). Localizes to sites of DNA damage (By similarity).</text>
</comment>
<comment type="domain">
    <text evidence="1">The bromo domain mediates the specific interaction with acetylated histones.</text>
</comment>
<comment type="similarity">
    <text evidence="10">Belongs to the WAL family. BAZ1B subfamily.</text>
</comment>
<comment type="sequence caution" evidence="10">
    <conflict type="erroneous gene model prediction">
        <sequence resource="EMBL-CDS" id="CAM13000"/>
    </conflict>
</comment>
<protein>
    <recommendedName>
        <fullName>Tyrosine-protein kinase BAZ1B</fullName>
        <ecNumber>2.7.10.2</ecNumber>
    </recommendedName>
    <alternativeName>
        <fullName>Bromodomain adjacent to zinc finger domain protein 1B</fullName>
    </alternativeName>
    <alternativeName>
        <fullName>Williams syndrome transcription factor homolog</fullName>
    </alternativeName>
</protein>
<evidence type="ECO:0000250" key="1"/>
<evidence type="ECO:0000250" key="2">
    <source>
        <dbReference type="UniProtKB" id="Q9UIG0"/>
    </source>
</evidence>
<evidence type="ECO:0000255" key="3"/>
<evidence type="ECO:0000255" key="4">
    <source>
        <dbReference type="PROSITE-ProRule" id="PRU00035"/>
    </source>
</evidence>
<evidence type="ECO:0000255" key="5">
    <source>
        <dbReference type="PROSITE-ProRule" id="PRU00063"/>
    </source>
</evidence>
<evidence type="ECO:0000255" key="6">
    <source>
        <dbReference type="PROSITE-ProRule" id="PRU00146"/>
    </source>
</evidence>
<evidence type="ECO:0000255" key="7">
    <source>
        <dbReference type="PROSITE-ProRule" id="PRU00475"/>
    </source>
</evidence>
<evidence type="ECO:0000256" key="8">
    <source>
        <dbReference type="SAM" id="MobiDB-lite"/>
    </source>
</evidence>
<evidence type="ECO:0000269" key="9">
    <source>
    </source>
</evidence>
<evidence type="ECO:0000305" key="10"/>
<organism>
    <name type="scientific">Danio rerio</name>
    <name type="common">Zebrafish</name>
    <name type="synonym">Brachydanio rerio</name>
    <dbReference type="NCBI Taxonomy" id="7955"/>
    <lineage>
        <taxon>Eukaryota</taxon>
        <taxon>Metazoa</taxon>
        <taxon>Chordata</taxon>
        <taxon>Craniata</taxon>
        <taxon>Vertebrata</taxon>
        <taxon>Euteleostomi</taxon>
        <taxon>Actinopterygii</taxon>
        <taxon>Neopterygii</taxon>
        <taxon>Teleostei</taxon>
        <taxon>Ostariophysi</taxon>
        <taxon>Cypriniformes</taxon>
        <taxon>Danionidae</taxon>
        <taxon>Danioninae</taxon>
        <taxon>Danio</taxon>
    </lineage>
</organism>
<reference key="1">
    <citation type="journal article" date="2013" name="Nature">
        <title>The zebrafish reference genome sequence and its relationship to the human genome.</title>
        <authorList>
            <person name="Howe K."/>
            <person name="Clark M.D."/>
            <person name="Torroja C.F."/>
            <person name="Torrance J."/>
            <person name="Berthelot C."/>
            <person name="Muffato M."/>
            <person name="Collins J.E."/>
            <person name="Humphray S."/>
            <person name="McLaren K."/>
            <person name="Matthews L."/>
            <person name="McLaren S."/>
            <person name="Sealy I."/>
            <person name="Caccamo M."/>
            <person name="Churcher C."/>
            <person name="Scott C."/>
            <person name="Barrett J.C."/>
            <person name="Koch R."/>
            <person name="Rauch G.J."/>
            <person name="White S."/>
            <person name="Chow W."/>
            <person name="Kilian B."/>
            <person name="Quintais L.T."/>
            <person name="Guerra-Assuncao J.A."/>
            <person name="Zhou Y."/>
            <person name="Gu Y."/>
            <person name="Yen J."/>
            <person name="Vogel J.H."/>
            <person name="Eyre T."/>
            <person name="Redmond S."/>
            <person name="Banerjee R."/>
            <person name="Chi J."/>
            <person name="Fu B."/>
            <person name="Langley E."/>
            <person name="Maguire S.F."/>
            <person name="Laird G.K."/>
            <person name="Lloyd D."/>
            <person name="Kenyon E."/>
            <person name="Donaldson S."/>
            <person name="Sehra H."/>
            <person name="Almeida-King J."/>
            <person name="Loveland J."/>
            <person name="Trevanion S."/>
            <person name="Jones M."/>
            <person name="Quail M."/>
            <person name="Willey D."/>
            <person name="Hunt A."/>
            <person name="Burton J."/>
            <person name="Sims S."/>
            <person name="McLay K."/>
            <person name="Plumb B."/>
            <person name="Davis J."/>
            <person name="Clee C."/>
            <person name="Oliver K."/>
            <person name="Clark R."/>
            <person name="Riddle C."/>
            <person name="Elliot D."/>
            <person name="Threadgold G."/>
            <person name="Harden G."/>
            <person name="Ware D."/>
            <person name="Begum S."/>
            <person name="Mortimore B."/>
            <person name="Kerry G."/>
            <person name="Heath P."/>
            <person name="Phillimore B."/>
            <person name="Tracey A."/>
            <person name="Corby N."/>
            <person name="Dunn M."/>
            <person name="Johnson C."/>
            <person name="Wood J."/>
            <person name="Clark S."/>
            <person name="Pelan S."/>
            <person name="Griffiths G."/>
            <person name="Smith M."/>
            <person name="Glithero R."/>
            <person name="Howden P."/>
            <person name="Barker N."/>
            <person name="Lloyd C."/>
            <person name="Stevens C."/>
            <person name="Harley J."/>
            <person name="Holt K."/>
            <person name="Panagiotidis G."/>
            <person name="Lovell J."/>
            <person name="Beasley H."/>
            <person name="Henderson C."/>
            <person name="Gordon D."/>
            <person name="Auger K."/>
            <person name="Wright D."/>
            <person name="Collins J."/>
            <person name="Raisen C."/>
            <person name="Dyer L."/>
            <person name="Leung K."/>
            <person name="Robertson L."/>
            <person name="Ambridge K."/>
            <person name="Leongamornlert D."/>
            <person name="McGuire S."/>
            <person name="Gilderthorp R."/>
            <person name="Griffiths C."/>
            <person name="Manthravadi D."/>
            <person name="Nichol S."/>
            <person name="Barker G."/>
            <person name="Whitehead S."/>
            <person name="Kay M."/>
            <person name="Brown J."/>
            <person name="Murnane C."/>
            <person name="Gray E."/>
            <person name="Humphries M."/>
            <person name="Sycamore N."/>
            <person name="Barker D."/>
            <person name="Saunders D."/>
            <person name="Wallis J."/>
            <person name="Babbage A."/>
            <person name="Hammond S."/>
            <person name="Mashreghi-Mohammadi M."/>
            <person name="Barr L."/>
            <person name="Martin S."/>
            <person name="Wray P."/>
            <person name="Ellington A."/>
            <person name="Matthews N."/>
            <person name="Ellwood M."/>
            <person name="Woodmansey R."/>
            <person name="Clark G."/>
            <person name="Cooper J."/>
            <person name="Tromans A."/>
            <person name="Grafham D."/>
            <person name="Skuce C."/>
            <person name="Pandian R."/>
            <person name="Andrews R."/>
            <person name="Harrison E."/>
            <person name="Kimberley A."/>
            <person name="Garnett J."/>
            <person name="Fosker N."/>
            <person name="Hall R."/>
            <person name="Garner P."/>
            <person name="Kelly D."/>
            <person name="Bird C."/>
            <person name="Palmer S."/>
            <person name="Gehring I."/>
            <person name="Berger A."/>
            <person name="Dooley C.M."/>
            <person name="Ersan-Urun Z."/>
            <person name="Eser C."/>
            <person name="Geiger H."/>
            <person name="Geisler M."/>
            <person name="Karotki L."/>
            <person name="Kirn A."/>
            <person name="Konantz J."/>
            <person name="Konantz M."/>
            <person name="Oberlander M."/>
            <person name="Rudolph-Geiger S."/>
            <person name="Teucke M."/>
            <person name="Lanz C."/>
            <person name="Raddatz G."/>
            <person name="Osoegawa K."/>
            <person name="Zhu B."/>
            <person name="Rapp A."/>
            <person name="Widaa S."/>
            <person name="Langford C."/>
            <person name="Yang F."/>
            <person name="Schuster S.C."/>
            <person name="Carter N.P."/>
            <person name="Harrow J."/>
            <person name="Ning Z."/>
            <person name="Herrero J."/>
            <person name="Searle S.M."/>
            <person name="Enright A."/>
            <person name="Geisler R."/>
            <person name="Plasterk R.H."/>
            <person name="Lee C."/>
            <person name="Westerfield M."/>
            <person name="de Jong P.J."/>
            <person name="Zon L.I."/>
            <person name="Postlethwait J.H."/>
            <person name="Nusslein-Volhard C."/>
            <person name="Hubbard T.J."/>
            <person name="Roest Crollius H."/>
            <person name="Rogers J."/>
            <person name="Stemple D.L."/>
        </authorList>
    </citation>
    <scope>NUCLEOTIDE SEQUENCE [LARGE SCALE GENOMIC DNA]</scope>
    <source>
        <strain>Tuebingen</strain>
    </source>
</reference>
<reference key="2">
    <citation type="journal article" date="2008" name="J. Proteome Res.">
        <title>Online automated in vivo zebrafish phosphoproteomics: from large-scale analysis down to a single embryo.</title>
        <authorList>
            <person name="Lemeer S."/>
            <person name="Pinkse M.W.H."/>
            <person name="Mohammed S."/>
            <person name="van Breukelen B."/>
            <person name="den Hertog J."/>
            <person name="Slijper M."/>
            <person name="Heck A.J.R."/>
        </authorList>
    </citation>
    <scope>PHOSPHORYLATION [LARGE SCALE ANALYSIS] AT SER-1349</scope>
    <scope>IDENTIFICATION BY MASS SPECTROMETRY</scope>
    <source>
        <tissue>Embryo</tissue>
    </source>
</reference>
<feature type="chain" id="PRO_0000378188" description="Tyrosine-protein kinase BAZ1B">
    <location>
        <begin position="1"/>
        <end position="1536"/>
    </location>
</feature>
<feature type="domain" description="WAC" evidence="7">
    <location>
        <begin position="25"/>
        <end position="130"/>
    </location>
</feature>
<feature type="domain" description="DDT" evidence="5">
    <location>
        <begin position="603"/>
        <end position="667"/>
    </location>
</feature>
<feature type="domain" description="Bromo" evidence="4">
    <location>
        <begin position="1366"/>
        <end position="1470"/>
    </location>
</feature>
<feature type="zinc finger region" description="PHD-type" evidence="6">
    <location>
        <begin position="1202"/>
        <end position="1252"/>
    </location>
</feature>
<feature type="region of interest" description="Disordered" evidence="8">
    <location>
        <begin position="144"/>
        <end position="207"/>
    </location>
</feature>
<feature type="region of interest" description="Disordered" evidence="8">
    <location>
        <begin position="304"/>
        <end position="470"/>
    </location>
</feature>
<feature type="region of interest" description="Disordered" evidence="8">
    <location>
        <begin position="557"/>
        <end position="579"/>
    </location>
</feature>
<feature type="region of interest" description="Disordered" evidence="8">
    <location>
        <begin position="785"/>
        <end position="839"/>
    </location>
</feature>
<feature type="region of interest" description="Disordered" evidence="8">
    <location>
        <begin position="940"/>
        <end position="973"/>
    </location>
</feature>
<feature type="region of interest" description="Disordered" evidence="8">
    <location>
        <begin position="1256"/>
        <end position="1371"/>
    </location>
</feature>
<feature type="region of interest" description="Disordered" evidence="8">
    <location>
        <begin position="1477"/>
        <end position="1536"/>
    </location>
</feature>
<feature type="coiled-coil region" evidence="3">
    <location>
        <begin position="515"/>
        <end position="583"/>
    </location>
</feature>
<feature type="coiled-coil region" evidence="3">
    <location>
        <begin position="768"/>
        <end position="803"/>
    </location>
</feature>
<feature type="coiled-coil region" evidence="3">
    <location>
        <begin position="850"/>
        <end position="890"/>
    </location>
</feature>
<feature type="coiled-coil region" evidence="3">
    <location>
        <begin position="1261"/>
        <end position="1293"/>
    </location>
</feature>
<feature type="compositionally biased region" description="Basic and acidic residues" evidence="8">
    <location>
        <begin position="151"/>
        <end position="196"/>
    </location>
</feature>
<feature type="compositionally biased region" description="Basic and acidic residues" evidence="8">
    <location>
        <begin position="334"/>
        <end position="343"/>
    </location>
</feature>
<feature type="compositionally biased region" description="Polar residues" evidence="8">
    <location>
        <begin position="344"/>
        <end position="355"/>
    </location>
</feature>
<feature type="compositionally biased region" description="Basic and acidic residues" evidence="8">
    <location>
        <begin position="392"/>
        <end position="401"/>
    </location>
</feature>
<feature type="compositionally biased region" description="Low complexity" evidence="8">
    <location>
        <begin position="443"/>
        <end position="452"/>
    </location>
</feature>
<feature type="compositionally biased region" description="Basic and acidic residues" evidence="8">
    <location>
        <begin position="785"/>
        <end position="832"/>
    </location>
</feature>
<feature type="compositionally biased region" description="Acidic residues" evidence="8">
    <location>
        <begin position="941"/>
        <end position="955"/>
    </location>
</feature>
<feature type="compositionally biased region" description="Acidic residues" evidence="8">
    <location>
        <begin position="962"/>
        <end position="972"/>
    </location>
</feature>
<feature type="compositionally biased region" description="Acidic residues" evidence="8">
    <location>
        <begin position="1266"/>
        <end position="1287"/>
    </location>
</feature>
<feature type="compositionally biased region" description="Basic residues" evidence="8">
    <location>
        <begin position="1297"/>
        <end position="1316"/>
    </location>
</feature>
<feature type="compositionally biased region" description="Low complexity" evidence="8">
    <location>
        <begin position="1325"/>
        <end position="1350"/>
    </location>
</feature>
<feature type="compositionally biased region" description="Acidic residues" evidence="8">
    <location>
        <begin position="1491"/>
        <end position="1502"/>
    </location>
</feature>
<feature type="compositionally biased region" description="Basic residues" evidence="8">
    <location>
        <begin position="1506"/>
        <end position="1524"/>
    </location>
</feature>
<feature type="compositionally biased region" description="Basic and acidic residues" evidence="8">
    <location>
        <begin position="1525"/>
        <end position="1536"/>
    </location>
</feature>
<feature type="modified residue" description="Phosphoserine" evidence="9">
    <location>
        <position position="1349"/>
    </location>
</feature>
<gene>
    <name type="primary">baz1b</name>
    <name type="synonym">wstf</name>
    <name type="ORF">ch211-203b8.1</name>
</gene>
<proteinExistence type="evidence at protein level"/>
<dbReference type="EC" id="2.7.10.2"/>
<dbReference type="EMBL" id="BX950182">
    <property type="protein sequence ID" value="CAM13000.1"/>
    <property type="status" value="ALT_SEQ"/>
    <property type="molecule type" value="Genomic_DNA"/>
</dbReference>
<dbReference type="SMR" id="A2BIL7"/>
<dbReference type="FunCoup" id="A2BIL7">
    <property type="interactions" value="1119"/>
</dbReference>
<dbReference type="STRING" id="7955.ENSDARP00000132502"/>
<dbReference type="iPTMnet" id="A2BIL7"/>
<dbReference type="PaxDb" id="7955-ENSDARP00000104660"/>
<dbReference type="PeptideAtlas" id="A2BIL7"/>
<dbReference type="AGR" id="ZFIN:ZDB-GENE-010328-16"/>
<dbReference type="ZFIN" id="ZDB-GENE-010328-16">
    <property type="gene designation" value="baz1b"/>
</dbReference>
<dbReference type="eggNOG" id="KOG1245">
    <property type="taxonomic scope" value="Eukaryota"/>
</dbReference>
<dbReference type="InParanoid" id="A2BIL7"/>
<dbReference type="PhylomeDB" id="A2BIL7"/>
<dbReference type="PRO" id="PR:A2BIL7"/>
<dbReference type="Proteomes" id="UP000000437">
    <property type="component" value="Unplaced"/>
</dbReference>
<dbReference type="GO" id="GO:0005634">
    <property type="term" value="C:nucleus"/>
    <property type="evidence" value="ECO:0000250"/>
    <property type="project" value="UniProtKB"/>
</dbReference>
<dbReference type="GO" id="GO:0090535">
    <property type="term" value="C:WICH complex"/>
    <property type="evidence" value="ECO:0000318"/>
    <property type="project" value="GO_Central"/>
</dbReference>
<dbReference type="GO" id="GO:0005524">
    <property type="term" value="F:ATP binding"/>
    <property type="evidence" value="ECO:0007669"/>
    <property type="project" value="UniProtKB-KW"/>
</dbReference>
<dbReference type="GO" id="GO:0042393">
    <property type="term" value="F:histone binding"/>
    <property type="evidence" value="ECO:0000318"/>
    <property type="project" value="GO_Central"/>
</dbReference>
<dbReference type="GO" id="GO:0140801">
    <property type="term" value="F:histone H2AXY142 kinase activity"/>
    <property type="evidence" value="ECO:0000250"/>
    <property type="project" value="UniProtKB"/>
</dbReference>
<dbReference type="GO" id="GO:0035173">
    <property type="term" value="F:histone kinase activity"/>
    <property type="evidence" value="ECO:0000318"/>
    <property type="project" value="GO_Central"/>
</dbReference>
<dbReference type="GO" id="GO:0004715">
    <property type="term" value="F:non-membrane spanning protein tyrosine kinase activity"/>
    <property type="evidence" value="ECO:0007669"/>
    <property type="project" value="UniProtKB-EC"/>
</dbReference>
<dbReference type="GO" id="GO:0008270">
    <property type="term" value="F:zinc ion binding"/>
    <property type="evidence" value="ECO:0007669"/>
    <property type="project" value="UniProtKB-KW"/>
</dbReference>
<dbReference type="GO" id="GO:0006338">
    <property type="term" value="P:chromatin remodeling"/>
    <property type="evidence" value="ECO:0000318"/>
    <property type="project" value="GO_Central"/>
</dbReference>
<dbReference type="GO" id="GO:0006974">
    <property type="term" value="P:DNA damage response"/>
    <property type="evidence" value="ECO:0000250"/>
    <property type="project" value="UniProtKB"/>
</dbReference>
<dbReference type="GO" id="GO:0043687">
    <property type="term" value="P:post-translational protein modification"/>
    <property type="evidence" value="ECO:0000250"/>
    <property type="project" value="UniProtKB"/>
</dbReference>
<dbReference type="CDD" id="cd05505">
    <property type="entry name" value="Bromo_WSTF_like"/>
    <property type="match status" value="1"/>
</dbReference>
<dbReference type="CDD" id="cd15628">
    <property type="entry name" value="PHD_BAZ1B"/>
    <property type="match status" value="1"/>
</dbReference>
<dbReference type="FunFam" id="3.30.40.10:FF:000131">
    <property type="entry name" value="tyrosine-protein kinase BAZ1B isoform X1"/>
    <property type="match status" value="1"/>
</dbReference>
<dbReference type="Gene3D" id="1.20.920.10">
    <property type="entry name" value="Bromodomain-like"/>
    <property type="match status" value="1"/>
</dbReference>
<dbReference type="Gene3D" id="3.30.40.10">
    <property type="entry name" value="Zinc/RING finger domain, C3HC4 (zinc finger)"/>
    <property type="match status" value="1"/>
</dbReference>
<dbReference type="InterPro" id="IPR047174">
    <property type="entry name" value="BAZ1B"/>
</dbReference>
<dbReference type="InterPro" id="IPR037375">
    <property type="entry name" value="BAZ1B_Bromo"/>
</dbReference>
<dbReference type="InterPro" id="IPR047256">
    <property type="entry name" value="BAZ1B_PHD"/>
</dbReference>
<dbReference type="InterPro" id="IPR001487">
    <property type="entry name" value="Bromodomain"/>
</dbReference>
<dbReference type="InterPro" id="IPR036427">
    <property type="entry name" value="Bromodomain-like_sf"/>
</dbReference>
<dbReference type="InterPro" id="IPR018501">
    <property type="entry name" value="DDT_dom"/>
</dbReference>
<dbReference type="InterPro" id="IPR028942">
    <property type="entry name" value="WHIM1_dom"/>
</dbReference>
<dbReference type="InterPro" id="IPR028941">
    <property type="entry name" value="WHIM2_dom"/>
</dbReference>
<dbReference type="InterPro" id="IPR013136">
    <property type="entry name" value="WSTF_Acf1_Cbp146"/>
</dbReference>
<dbReference type="InterPro" id="IPR019786">
    <property type="entry name" value="Zinc_finger_PHD-type_CS"/>
</dbReference>
<dbReference type="InterPro" id="IPR011011">
    <property type="entry name" value="Znf_FYVE_PHD"/>
</dbReference>
<dbReference type="InterPro" id="IPR001965">
    <property type="entry name" value="Znf_PHD"/>
</dbReference>
<dbReference type="InterPro" id="IPR019787">
    <property type="entry name" value="Znf_PHD-finger"/>
</dbReference>
<dbReference type="InterPro" id="IPR001841">
    <property type="entry name" value="Znf_RING"/>
</dbReference>
<dbReference type="InterPro" id="IPR013083">
    <property type="entry name" value="Znf_RING/FYVE/PHD"/>
</dbReference>
<dbReference type="PANTHER" id="PTHR46802">
    <property type="entry name" value="TYROSINE-PROTEIN KINASE BAZ1B"/>
    <property type="match status" value="1"/>
</dbReference>
<dbReference type="PANTHER" id="PTHR46802:SF1">
    <property type="entry name" value="TYROSINE-PROTEIN KINASE BAZ1B"/>
    <property type="match status" value="1"/>
</dbReference>
<dbReference type="Pfam" id="PF00439">
    <property type="entry name" value="Bromodomain"/>
    <property type="match status" value="1"/>
</dbReference>
<dbReference type="Pfam" id="PF00628">
    <property type="entry name" value="PHD"/>
    <property type="match status" value="1"/>
</dbReference>
<dbReference type="Pfam" id="PF10537">
    <property type="entry name" value="WAC_Acf1_DNA_bd"/>
    <property type="match status" value="1"/>
</dbReference>
<dbReference type="Pfam" id="PF15612">
    <property type="entry name" value="WHIM1"/>
    <property type="match status" value="1"/>
</dbReference>
<dbReference type="Pfam" id="PF15613">
    <property type="entry name" value="WSD"/>
    <property type="match status" value="1"/>
</dbReference>
<dbReference type="PRINTS" id="PR00503">
    <property type="entry name" value="BROMODOMAIN"/>
</dbReference>
<dbReference type="SMART" id="SM00297">
    <property type="entry name" value="BROMO"/>
    <property type="match status" value="1"/>
</dbReference>
<dbReference type="SMART" id="SM00571">
    <property type="entry name" value="DDT"/>
    <property type="match status" value="1"/>
</dbReference>
<dbReference type="SMART" id="SM00249">
    <property type="entry name" value="PHD"/>
    <property type="match status" value="1"/>
</dbReference>
<dbReference type="SUPFAM" id="SSF47370">
    <property type="entry name" value="Bromodomain"/>
    <property type="match status" value="1"/>
</dbReference>
<dbReference type="SUPFAM" id="SSF57903">
    <property type="entry name" value="FYVE/PHD zinc finger"/>
    <property type="match status" value="1"/>
</dbReference>
<dbReference type="PROSITE" id="PS50014">
    <property type="entry name" value="BROMODOMAIN_2"/>
    <property type="match status" value="1"/>
</dbReference>
<dbReference type="PROSITE" id="PS50827">
    <property type="entry name" value="DDT"/>
    <property type="match status" value="1"/>
</dbReference>
<dbReference type="PROSITE" id="PS51136">
    <property type="entry name" value="WAC"/>
    <property type="match status" value="1"/>
</dbReference>
<dbReference type="PROSITE" id="PS01359">
    <property type="entry name" value="ZF_PHD_1"/>
    <property type="match status" value="1"/>
</dbReference>
<dbReference type="PROSITE" id="PS50016">
    <property type="entry name" value="ZF_PHD_2"/>
    <property type="match status" value="1"/>
</dbReference>
<keyword id="KW-0067">ATP-binding</keyword>
<keyword id="KW-0103">Bromodomain</keyword>
<keyword id="KW-0175">Coiled coil</keyword>
<keyword id="KW-0227">DNA damage</keyword>
<keyword id="KW-0418">Kinase</keyword>
<keyword id="KW-0479">Metal-binding</keyword>
<keyword id="KW-0547">Nucleotide-binding</keyword>
<keyword id="KW-0539">Nucleus</keyword>
<keyword id="KW-0597">Phosphoprotein</keyword>
<keyword id="KW-1185">Reference proteome</keyword>
<keyword id="KW-0804">Transcription</keyword>
<keyword id="KW-0805">Transcription regulation</keyword>
<keyword id="KW-0808">Transferase</keyword>
<keyword id="KW-0829">Tyrosine-protein kinase</keyword>
<keyword id="KW-0862">Zinc</keyword>
<keyword id="KW-0863">Zinc-finger</keyword>
<sequence length="1536" mass="176213">MAPLLGRKPYPLVKPLSEPPGPGEEVYTIEHTKEAFRNKEEYEARLRRYGERIWTCKSTGSSQLTHKEAWEEEQEVTELLQEEYPVWFEKPVLEIVHHNTVPLDKLVDQVWVEILTKYAVGEKCDLMVGNDKTLSVEVVKIHPLENPPEENAEKKMEGACDSPSSDKENASQENLKKEPQSKEEESRRESLSDRARRSPRKLPTTMKEEKKKWVMPKFLPHKYDVKLVNEDKVISDVPADNLFRTERPPNKEIMRYFIRHYALRLGSGESAPWVVEDELVKKFSLPSKFSDFLLDPHKFLAENPSTKRKSLSSPEGKPRKRLKNVETGTGGEGAKGDKKKNKDSQNIPLSPTIWSHMQVKKVNGSPLKMKNSGTSKKSDEENVLGTPKSSKKQGDKKSSDPKRRRKSGLNKTPNSQRLSKKEDKSLGGAKKPRMKQMTLLDLAKSPAAAGSPKKQRRSSTTGSAKLGKPFPPMALHLLRFYKENKGKEDKKTTLSSLLSKAAKALSPEDRSRLPEELKELVQKRWELLEQKRRWALMSEEEKQSVLKQKRQEVKQKLREKAKERREKEMQVRREMSRRYEDQELEGKNLPAFRLFDMPEGLPNTIFGDVAMVVEFLHCYSGLLMPDDQYPITSIALLEALAGEKAGFLYLNRVLVVLLQTLLQDELAEGYSELDMPLSEIPLTMHSVSELVRLCLRPSDAHEEESARGSDDWQSGADFDDMVSSEFLEKLETAEVFELDPQEKVSLLLALCHRILMTYSVEDHVEAVHQKSAEMWKERVATLKEANDRKRAEKQKRKEQMETKTDGDVLIKAEKKKESTVKKETPKVLPKEEPEPEDMISTVKSRRLMSIQAKKEKEEQERLNKVRMEKEAEEERIRRQKAATEKAFQDAVTKAKLVLRRTPLGTDRNHNRYWLFSDVVPGLYIEKGWVHESIDYSFTLPPEEEPVLTEEEEEEEEVKKEEETEDGEKEDEGSIISASNDISQQGAPSHESSIETTVPKQGQNLWFVCDTPKDFDELLESLHPQGVRESELKIRLQINYQEILHSIHLTKKGNPGLKTCDGHQELLKFLRSDIIEVASRLQKGGLGYLEDTSEFEEFEERVKTLEKLPEFGECVIALQESVIKKFLQGFMAPKQKKKKKTGGEESTTAEEVDDQKKLAEEARVATAVEKWKTAVREAQTFSRMHVLLGMLDACIKWDMSAENARCKVCRRKGEDDKLILCDECNKAFHLFCLRPALYRIPAGEWLCPACQPTIARRSSRGRNYKEDSEEEEDSEEEDEEESEEEDSEEEHRNTGHSLRSRKKVKTSSKSKMQKKPAKPASRSASKTDTNPSKTSPKSSAKPKSRAAPSSPVDIDELVRQSSKPPSRKKDVELQKCEEILQKIMKFRHSWPFREPVSAEEAEDYQDVITSPMDLTTMQGKFKSSEYHSASDFIEDMKLIFSNAEEYNQPSSNVLTCMSRTEEAFVELLQKSLPGVSYLRRRTRKRAATPSDNSDDDDDDEEEDERSKKQKNGKQGKKASSKRKVEHSRTEKYQTKQK</sequence>
<accession>A2BIL7</accession>
<name>BAZ1B_DANRE</name>